<reference key="1">
    <citation type="submission" date="2006-09" db="EMBL/GenBank/DDBJ databases">
        <title>The NIAID influenza genome sequencing project.</title>
        <authorList>
            <person name="Ghedin E."/>
            <person name="Spiro D."/>
            <person name="Miller N."/>
            <person name="Zaborsky J."/>
            <person name="Feldblyum T."/>
            <person name="Subbu V."/>
            <person name="Shumway M."/>
            <person name="Sparenborg J."/>
            <person name="Groveman L."/>
            <person name="Halpin R."/>
            <person name="Sitz J."/>
            <person name="Koo H."/>
            <person name="Salzberg S.L."/>
            <person name="Webster R.G."/>
            <person name="Hoffmann E."/>
            <person name="Krauss S."/>
            <person name="Naeve C."/>
            <person name="Bao Y."/>
            <person name="Bolotov P."/>
            <person name="Dernovoy D."/>
            <person name="Kiryutin B."/>
            <person name="Lipman D.J."/>
            <person name="Tatusova T."/>
        </authorList>
    </citation>
    <scope>NUCLEOTIDE SEQUENCE [GENOMIC RNA]</scope>
</reference>
<reference key="2">
    <citation type="submission" date="2006-09" db="EMBL/GenBank/DDBJ databases">
        <authorList>
            <consortium name="The NIAID Influenza Genome Sequencing Consortium"/>
        </authorList>
    </citation>
    <scope>NUCLEOTIDE SEQUENCE [GENOMIC RNA]</scope>
</reference>
<sequence>MGQEQGTPWIQSTGHISTQKEEDGQKIPKLEHRNSTQLMGHYQKTMNQVAMPKQIVY</sequence>
<gene>
    <name evidence="1" type="primary">PB1</name>
    <name type="synonym">PB1-F2</name>
</gene>
<keyword id="KW-1035">Host cytoplasm</keyword>
<keyword id="KW-1048">Host nucleus</keyword>
<accession>Q07FH6</accession>
<organism>
    <name type="scientific">Influenza A virus (strain A/China:Nanchang/11/1996 H1N1)</name>
    <dbReference type="NCBI Taxonomy" id="394786"/>
    <lineage>
        <taxon>Viruses</taxon>
        <taxon>Riboviria</taxon>
        <taxon>Orthornavirae</taxon>
        <taxon>Negarnaviricota</taxon>
        <taxon>Polyploviricotina</taxon>
        <taxon>Insthoviricetes</taxon>
        <taxon>Articulavirales</taxon>
        <taxon>Orthomyxoviridae</taxon>
        <taxon>Alphainfluenzavirus</taxon>
        <taxon>Alphainfluenzavirus influenzae</taxon>
        <taxon>Influenza A virus</taxon>
    </lineage>
</organism>
<proteinExistence type="inferred from homology"/>
<evidence type="ECO:0000255" key="1">
    <source>
        <dbReference type="HAMAP-Rule" id="MF_04064"/>
    </source>
</evidence>
<evidence type="ECO:0000256" key="2">
    <source>
        <dbReference type="SAM" id="MobiDB-lite"/>
    </source>
</evidence>
<organismHost>
    <name type="scientific">Aves</name>
    <dbReference type="NCBI Taxonomy" id="8782"/>
</organismHost>
<organismHost>
    <name type="scientific">Homo sapiens</name>
    <name type="common">Human</name>
    <dbReference type="NCBI Taxonomy" id="9606"/>
</organismHost>
<organismHost>
    <name type="scientific">Sus scrofa</name>
    <name type="common">Pig</name>
    <dbReference type="NCBI Taxonomy" id="9823"/>
</organismHost>
<name>PB1F2_I96A3</name>
<protein>
    <recommendedName>
        <fullName evidence="1">Protein PB1-F2</fullName>
    </recommendedName>
</protein>
<dbReference type="EMBL" id="CY016242">
    <property type="protein sequence ID" value="ABI95270.1"/>
    <property type="molecule type" value="Other_RNA"/>
</dbReference>
<dbReference type="SMR" id="Q07FH6"/>
<dbReference type="Proteomes" id="UP000008586">
    <property type="component" value="Genome"/>
</dbReference>
<dbReference type="GO" id="GO:0044164">
    <property type="term" value="C:host cell cytosol"/>
    <property type="evidence" value="ECO:0007669"/>
    <property type="project" value="UniProtKB-SubCell"/>
</dbReference>
<dbReference type="GO" id="GO:0042025">
    <property type="term" value="C:host cell nucleus"/>
    <property type="evidence" value="ECO:0007669"/>
    <property type="project" value="UniProtKB-SubCell"/>
</dbReference>
<dbReference type="GO" id="GO:0016020">
    <property type="term" value="C:membrane"/>
    <property type="evidence" value="ECO:0007669"/>
    <property type="project" value="UniProtKB-UniRule"/>
</dbReference>
<dbReference type="GO" id="GO:0039545">
    <property type="term" value="P:symbiont-mediated suppression of host cytoplasmic pattern recognition receptor signaling pathway via inhibition of MAVS activity"/>
    <property type="evidence" value="ECO:0000250"/>
    <property type="project" value="UniProtKB"/>
</dbReference>
<dbReference type="HAMAP" id="MF_04064">
    <property type="entry name" value="INFV_PB1F2"/>
    <property type="match status" value="1"/>
</dbReference>
<dbReference type="InterPro" id="IPR021045">
    <property type="entry name" value="Flu_proapoptotic_PB1-F2"/>
</dbReference>
<dbReference type="Pfam" id="PF11986">
    <property type="entry name" value="PB1-F2"/>
    <property type="match status" value="1"/>
</dbReference>
<comment type="function">
    <text evidence="1">May play an important role in promoting lung pathology in both primary viral infection and secondary bacterial infection.</text>
</comment>
<comment type="subcellular location">
    <subcellularLocation>
        <location evidence="1">Host nucleus</location>
    </subcellularLocation>
    <subcellularLocation>
        <location evidence="1">Host cytoplasm</location>
        <location evidence="1">Host cytosol</location>
    </subcellularLocation>
</comment>
<comment type="miscellaneous">
    <text>Is not encoded in all strains, and seems to be dispensable for replication.</text>
</comment>
<comment type="similarity">
    <text evidence="1">Belongs to the influenza viruses PB1-F2 family.</text>
</comment>
<feature type="chain" id="PRO_0000373026" description="Protein PB1-F2">
    <location>
        <begin position="1"/>
        <end position="57"/>
    </location>
</feature>
<feature type="region of interest" description="Disordered" evidence="2">
    <location>
        <begin position="1"/>
        <end position="35"/>
    </location>
</feature>
<feature type="compositionally biased region" description="Polar residues" evidence="2">
    <location>
        <begin position="1"/>
        <end position="17"/>
    </location>
</feature>
<feature type="compositionally biased region" description="Basic and acidic residues" evidence="2">
    <location>
        <begin position="18"/>
        <end position="34"/>
    </location>
</feature>